<reference key="1">
    <citation type="journal article" date="2008" name="Genome Biol.">
        <title>The complete genome, comparative and functional analysis of Stenotrophomonas maltophilia reveals an organism heavily shielded by drug resistance determinants.</title>
        <authorList>
            <person name="Crossman L.C."/>
            <person name="Gould V.C."/>
            <person name="Dow J.M."/>
            <person name="Vernikos G.S."/>
            <person name="Okazaki A."/>
            <person name="Sebaihia M."/>
            <person name="Saunders D."/>
            <person name="Arrowsmith C."/>
            <person name="Carver T."/>
            <person name="Peters N."/>
            <person name="Adlem E."/>
            <person name="Kerhornou A."/>
            <person name="Lord A."/>
            <person name="Murphy L."/>
            <person name="Seeger K."/>
            <person name="Squares R."/>
            <person name="Rutter S."/>
            <person name="Quail M.A."/>
            <person name="Rajandream M.A."/>
            <person name="Harris D."/>
            <person name="Churcher C."/>
            <person name="Bentley S.D."/>
            <person name="Parkhill J."/>
            <person name="Thomson N.R."/>
            <person name="Avison M.B."/>
        </authorList>
    </citation>
    <scope>NUCLEOTIDE SEQUENCE [LARGE SCALE GENOMIC DNA]</scope>
    <source>
        <strain>K279a</strain>
    </source>
</reference>
<protein>
    <recommendedName>
        <fullName evidence="1">Small ribosomal subunit protein uS8</fullName>
    </recommendedName>
    <alternativeName>
        <fullName evidence="2">30S ribosomal protein S8</fullName>
    </alternativeName>
</protein>
<dbReference type="EMBL" id="AM743169">
    <property type="protein sequence ID" value="CAQ44489.1"/>
    <property type="molecule type" value="Genomic_DNA"/>
</dbReference>
<dbReference type="RefSeq" id="WP_005408210.1">
    <property type="nucleotide sequence ID" value="NC_010943.1"/>
</dbReference>
<dbReference type="SMR" id="B2FQJ8"/>
<dbReference type="EnsemblBacteria" id="CAQ44489">
    <property type="protein sequence ID" value="CAQ44489"/>
    <property type="gene ID" value="Smlt0920"/>
</dbReference>
<dbReference type="GeneID" id="93831950"/>
<dbReference type="KEGG" id="sml:Smlt0920"/>
<dbReference type="eggNOG" id="COG0096">
    <property type="taxonomic scope" value="Bacteria"/>
</dbReference>
<dbReference type="HOGENOM" id="CLU_098428_0_0_6"/>
<dbReference type="Proteomes" id="UP000008840">
    <property type="component" value="Chromosome"/>
</dbReference>
<dbReference type="GO" id="GO:1990904">
    <property type="term" value="C:ribonucleoprotein complex"/>
    <property type="evidence" value="ECO:0007669"/>
    <property type="project" value="UniProtKB-KW"/>
</dbReference>
<dbReference type="GO" id="GO:0005840">
    <property type="term" value="C:ribosome"/>
    <property type="evidence" value="ECO:0007669"/>
    <property type="project" value="UniProtKB-KW"/>
</dbReference>
<dbReference type="GO" id="GO:0019843">
    <property type="term" value="F:rRNA binding"/>
    <property type="evidence" value="ECO:0007669"/>
    <property type="project" value="UniProtKB-UniRule"/>
</dbReference>
<dbReference type="GO" id="GO:0003735">
    <property type="term" value="F:structural constituent of ribosome"/>
    <property type="evidence" value="ECO:0007669"/>
    <property type="project" value="InterPro"/>
</dbReference>
<dbReference type="GO" id="GO:0006412">
    <property type="term" value="P:translation"/>
    <property type="evidence" value="ECO:0007669"/>
    <property type="project" value="UniProtKB-UniRule"/>
</dbReference>
<dbReference type="FunFam" id="3.30.1370.30:FF:000003">
    <property type="entry name" value="30S ribosomal protein S8"/>
    <property type="match status" value="1"/>
</dbReference>
<dbReference type="FunFam" id="3.30.1490.10:FF:000001">
    <property type="entry name" value="30S ribosomal protein S8"/>
    <property type="match status" value="1"/>
</dbReference>
<dbReference type="Gene3D" id="3.30.1370.30">
    <property type="match status" value="1"/>
</dbReference>
<dbReference type="Gene3D" id="3.30.1490.10">
    <property type="match status" value="1"/>
</dbReference>
<dbReference type="HAMAP" id="MF_01302_B">
    <property type="entry name" value="Ribosomal_uS8_B"/>
    <property type="match status" value="1"/>
</dbReference>
<dbReference type="InterPro" id="IPR000630">
    <property type="entry name" value="Ribosomal_uS8"/>
</dbReference>
<dbReference type="InterPro" id="IPR047863">
    <property type="entry name" value="Ribosomal_uS8_CS"/>
</dbReference>
<dbReference type="InterPro" id="IPR035987">
    <property type="entry name" value="Ribosomal_uS8_sf"/>
</dbReference>
<dbReference type="NCBIfam" id="NF001109">
    <property type="entry name" value="PRK00136.1"/>
    <property type="match status" value="1"/>
</dbReference>
<dbReference type="PANTHER" id="PTHR11758">
    <property type="entry name" value="40S RIBOSOMAL PROTEIN S15A"/>
    <property type="match status" value="1"/>
</dbReference>
<dbReference type="Pfam" id="PF00410">
    <property type="entry name" value="Ribosomal_S8"/>
    <property type="match status" value="1"/>
</dbReference>
<dbReference type="SUPFAM" id="SSF56047">
    <property type="entry name" value="Ribosomal protein S8"/>
    <property type="match status" value="1"/>
</dbReference>
<dbReference type="PROSITE" id="PS00053">
    <property type="entry name" value="RIBOSOMAL_S8"/>
    <property type="match status" value="1"/>
</dbReference>
<evidence type="ECO:0000255" key="1">
    <source>
        <dbReference type="HAMAP-Rule" id="MF_01302"/>
    </source>
</evidence>
<evidence type="ECO:0000305" key="2"/>
<sequence>MSMTDPIADLLVRIKNAAAVGKQTVKAPSSKIKVAIAQVLKDEGYITDLRVTQLENNKSELEIVLKYFEGKPVIATLKRFSRSGLRQYRGKSELPKVMNGLGISIISTSKGIMTDAQARQLGVGGEVLCFVA</sequence>
<feature type="chain" id="PRO_1000140618" description="Small ribosomal subunit protein uS8">
    <location>
        <begin position="1"/>
        <end position="132"/>
    </location>
</feature>
<comment type="function">
    <text evidence="1">One of the primary rRNA binding proteins, it binds directly to 16S rRNA central domain where it helps coordinate assembly of the platform of the 30S subunit.</text>
</comment>
<comment type="subunit">
    <text evidence="1">Part of the 30S ribosomal subunit. Contacts proteins S5 and S12.</text>
</comment>
<comment type="similarity">
    <text evidence="1">Belongs to the universal ribosomal protein uS8 family.</text>
</comment>
<proteinExistence type="inferred from homology"/>
<gene>
    <name evidence="1" type="primary">rpsH</name>
    <name type="ordered locus">Smlt0920</name>
</gene>
<keyword id="KW-1185">Reference proteome</keyword>
<keyword id="KW-0687">Ribonucleoprotein</keyword>
<keyword id="KW-0689">Ribosomal protein</keyword>
<keyword id="KW-0694">RNA-binding</keyword>
<keyword id="KW-0699">rRNA-binding</keyword>
<accession>B2FQJ8</accession>
<organism>
    <name type="scientific">Stenotrophomonas maltophilia (strain K279a)</name>
    <dbReference type="NCBI Taxonomy" id="522373"/>
    <lineage>
        <taxon>Bacteria</taxon>
        <taxon>Pseudomonadati</taxon>
        <taxon>Pseudomonadota</taxon>
        <taxon>Gammaproteobacteria</taxon>
        <taxon>Lysobacterales</taxon>
        <taxon>Lysobacteraceae</taxon>
        <taxon>Stenotrophomonas</taxon>
        <taxon>Stenotrophomonas maltophilia group</taxon>
    </lineage>
</organism>
<name>RS8_STRMK</name>